<proteinExistence type="inferred from homology"/>
<sequence>MTAITASMVKELRDRTGLAMMECKKALTEANGDIELAIDNLRKSGQAKAAKKAGNIAADGAITIVQDGNKAILVEVNCQTDFVAKDENFSNFAHTVAAAALAAGETDAAKIAELKLADGQSVEEARIALVQKIGENIQVRRAKIVEGEQLAIYKHGLKIGVVVSYTGDADTGKGIAMHVAAFNPVAVNAEAVPADLIAKEKEIAEAKALESGKPANIVEKMVTGSVEKYLNEVALDRQMYVIDNEKKVADVLKATGTNVANFVRFEVGEGIEKKAELSFAEEVAAAQAAAK</sequence>
<keyword id="KW-0963">Cytoplasm</keyword>
<keyword id="KW-0251">Elongation factor</keyword>
<keyword id="KW-0648">Protein biosynthesis</keyword>
<accession>B7I3K0</accession>
<dbReference type="EMBL" id="CP001182">
    <property type="protein sequence ID" value="ACJ42106.1"/>
    <property type="molecule type" value="Genomic_DNA"/>
</dbReference>
<dbReference type="RefSeq" id="WP_000125378.1">
    <property type="nucleotide sequence ID" value="NC_011586.2"/>
</dbReference>
<dbReference type="SMR" id="B7I3K0"/>
<dbReference type="GeneID" id="92894652"/>
<dbReference type="KEGG" id="abn:AB57_2755"/>
<dbReference type="HOGENOM" id="CLU_047155_0_2_6"/>
<dbReference type="Proteomes" id="UP000007094">
    <property type="component" value="Chromosome"/>
</dbReference>
<dbReference type="GO" id="GO:0005737">
    <property type="term" value="C:cytoplasm"/>
    <property type="evidence" value="ECO:0007669"/>
    <property type="project" value="UniProtKB-SubCell"/>
</dbReference>
<dbReference type="GO" id="GO:0003746">
    <property type="term" value="F:translation elongation factor activity"/>
    <property type="evidence" value="ECO:0007669"/>
    <property type="project" value="UniProtKB-UniRule"/>
</dbReference>
<dbReference type="CDD" id="cd14275">
    <property type="entry name" value="UBA_EF-Ts"/>
    <property type="match status" value="1"/>
</dbReference>
<dbReference type="FunFam" id="1.10.286.20:FF:000001">
    <property type="entry name" value="Elongation factor Ts"/>
    <property type="match status" value="1"/>
</dbReference>
<dbReference type="FunFam" id="1.10.8.10:FF:000001">
    <property type="entry name" value="Elongation factor Ts"/>
    <property type="match status" value="1"/>
</dbReference>
<dbReference type="FunFam" id="3.30.479.20:FF:000001">
    <property type="entry name" value="Elongation factor Ts"/>
    <property type="match status" value="1"/>
</dbReference>
<dbReference type="Gene3D" id="1.10.286.20">
    <property type="match status" value="1"/>
</dbReference>
<dbReference type="Gene3D" id="1.10.8.10">
    <property type="entry name" value="DNA helicase RuvA subunit, C-terminal domain"/>
    <property type="match status" value="1"/>
</dbReference>
<dbReference type="Gene3D" id="3.30.479.20">
    <property type="entry name" value="Elongation factor Ts, dimerisation domain"/>
    <property type="match status" value="2"/>
</dbReference>
<dbReference type="HAMAP" id="MF_00050">
    <property type="entry name" value="EF_Ts"/>
    <property type="match status" value="1"/>
</dbReference>
<dbReference type="InterPro" id="IPR036402">
    <property type="entry name" value="EF-Ts_dimer_sf"/>
</dbReference>
<dbReference type="InterPro" id="IPR001816">
    <property type="entry name" value="Transl_elong_EFTs/EF1B"/>
</dbReference>
<dbReference type="InterPro" id="IPR014039">
    <property type="entry name" value="Transl_elong_EFTs/EF1B_dimer"/>
</dbReference>
<dbReference type="InterPro" id="IPR018101">
    <property type="entry name" value="Transl_elong_Ts_CS"/>
</dbReference>
<dbReference type="InterPro" id="IPR009060">
    <property type="entry name" value="UBA-like_sf"/>
</dbReference>
<dbReference type="NCBIfam" id="TIGR00116">
    <property type="entry name" value="tsf"/>
    <property type="match status" value="1"/>
</dbReference>
<dbReference type="PANTHER" id="PTHR11741">
    <property type="entry name" value="ELONGATION FACTOR TS"/>
    <property type="match status" value="1"/>
</dbReference>
<dbReference type="PANTHER" id="PTHR11741:SF0">
    <property type="entry name" value="ELONGATION FACTOR TS, MITOCHONDRIAL"/>
    <property type="match status" value="1"/>
</dbReference>
<dbReference type="Pfam" id="PF00889">
    <property type="entry name" value="EF_TS"/>
    <property type="match status" value="1"/>
</dbReference>
<dbReference type="SUPFAM" id="SSF54713">
    <property type="entry name" value="Elongation factor Ts (EF-Ts), dimerisation domain"/>
    <property type="match status" value="1"/>
</dbReference>
<dbReference type="SUPFAM" id="SSF46934">
    <property type="entry name" value="UBA-like"/>
    <property type="match status" value="1"/>
</dbReference>
<dbReference type="PROSITE" id="PS01126">
    <property type="entry name" value="EF_TS_1"/>
    <property type="match status" value="1"/>
</dbReference>
<dbReference type="PROSITE" id="PS01127">
    <property type="entry name" value="EF_TS_2"/>
    <property type="match status" value="1"/>
</dbReference>
<name>EFTS_ACIB5</name>
<protein>
    <recommendedName>
        <fullName evidence="1">Elongation factor Ts</fullName>
        <shortName evidence="1">EF-Ts</shortName>
    </recommendedName>
</protein>
<gene>
    <name evidence="1" type="primary">tsf</name>
    <name type="ordered locus">AB57_2755</name>
</gene>
<reference key="1">
    <citation type="journal article" date="2008" name="J. Bacteriol.">
        <title>Comparative genome sequence analysis of multidrug-resistant Acinetobacter baumannii.</title>
        <authorList>
            <person name="Adams M.D."/>
            <person name="Goglin K."/>
            <person name="Molyneaux N."/>
            <person name="Hujer K.M."/>
            <person name="Lavender H."/>
            <person name="Jamison J.J."/>
            <person name="MacDonald I.J."/>
            <person name="Martin K.M."/>
            <person name="Russo T."/>
            <person name="Campagnari A.A."/>
            <person name="Hujer A.M."/>
            <person name="Bonomo R.A."/>
            <person name="Gill S.R."/>
        </authorList>
    </citation>
    <scope>NUCLEOTIDE SEQUENCE [LARGE SCALE GENOMIC DNA]</scope>
    <source>
        <strain>AB0057</strain>
    </source>
</reference>
<feature type="chain" id="PRO_1000116676" description="Elongation factor Ts">
    <location>
        <begin position="1"/>
        <end position="291"/>
    </location>
</feature>
<feature type="region of interest" description="Involved in Mg(2+) ion dislocation from EF-Tu" evidence="1">
    <location>
        <begin position="80"/>
        <end position="83"/>
    </location>
</feature>
<comment type="function">
    <text evidence="1">Associates with the EF-Tu.GDP complex and induces the exchange of GDP to GTP. It remains bound to the aminoacyl-tRNA.EF-Tu.GTP complex up to the GTP hydrolysis stage on the ribosome.</text>
</comment>
<comment type="subcellular location">
    <subcellularLocation>
        <location evidence="1">Cytoplasm</location>
    </subcellularLocation>
</comment>
<comment type="similarity">
    <text evidence="1">Belongs to the EF-Ts family.</text>
</comment>
<organism>
    <name type="scientific">Acinetobacter baumannii (strain AB0057)</name>
    <dbReference type="NCBI Taxonomy" id="480119"/>
    <lineage>
        <taxon>Bacteria</taxon>
        <taxon>Pseudomonadati</taxon>
        <taxon>Pseudomonadota</taxon>
        <taxon>Gammaproteobacteria</taxon>
        <taxon>Moraxellales</taxon>
        <taxon>Moraxellaceae</taxon>
        <taxon>Acinetobacter</taxon>
        <taxon>Acinetobacter calcoaceticus/baumannii complex</taxon>
    </lineage>
</organism>
<evidence type="ECO:0000255" key="1">
    <source>
        <dbReference type="HAMAP-Rule" id="MF_00050"/>
    </source>
</evidence>